<gene>
    <name type="ordered locus">MVA109L</name>
    <name type="ordered locus">ACAM3000_MVA_109</name>
</gene>
<evidence type="ECO:0000250" key="1"/>
<evidence type="ECO:0000305" key="2"/>
<keyword id="KW-0506">mRNA capping</keyword>
<keyword id="KW-0507">mRNA processing</keyword>
<keyword id="KW-0804">Transcription</keyword>
<keyword id="KW-0805">Transcription regulation</keyword>
<keyword id="KW-0806">Transcription termination</keyword>
<keyword id="KW-0946">Virion</keyword>
<organism>
    <name type="scientific">Vaccinia virus (strain Ankara)</name>
    <name type="common">VACV</name>
    <dbReference type="NCBI Taxonomy" id="126794"/>
    <lineage>
        <taxon>Viruses</taxon>
        <taxon>Varidnaviria</taxon>
        <taxon>Bamfordvirae</taxon>
        <taxon>Nucleocytoviricota</taxon>
        <taxon>Pokkesviricetes</taxon>
        <taxon>Chitovirales</taxon>
        <taxon>Poxviridae</taxon>
        <taxon>Chordopoxvirinae</taxon>
        <taxon>Orthopoxvirus</taxon>
        <taxon>Vaccinia virus</taxon>
    </lineage>
</organism>
<protein>
    <recommendedName>
        <fullName>mRNA-capping enzyme regulatory subunit</fullName>
    </recommendedName>
    <alternativeName>
        <fullName>Virus termination factor small subunit</fullName>
        <shortName>VTF small subunit</shortName>
    </alternativeName>
    <alternativeName>
        <fullName>mRNA-capping enzyme 33 kDa subunit</fullName>
    </alternativeName>
    <alternativeName>
        <fullName>mRNA-capping enzyme D12 subunit</fullName>
    </alternativeName>
    <alternativeName>
        <fullName>mRNA-capping enzyme small subunit</fullName>
    </alternativeName>
</protein>
<dbReference type="EMBL" id="U94848">
    <property type="protein sequence ID" value="AAB96452.1"/>
    <property type="molecule type" value="Genomic_DNA"/>
</dbReference>
<dbReference type="EMBL" id="AY603355">
    <property type="protein sequence ID" value="AAT10507.1"/>
    <property type="molecule type" value="Genomic_DNA"/>
</dbReference>
<dbReference type="PIR" id="T37385">
    <property type="entry name" value="T37385"/>
</dbReference>
<dbReference type="SMR" id="O57215"/>
<dbReference type="IntAct" id="O57215">
    <property type="interactions" value="1"/>
</dbReference>
<dbReference type="MINT" id="O57215"/>
<dbReference type="Proteomes" id="UP000159908">
    <property type="component" value="Segment"/>
</dbReference>
<dbReference type="Proteomes" id="UP000172909">
    <property type="component" value="Segment"/>
</dbReference>
<dbReference type="GO" id="GO:0044423">
    <property type="term" value="C:virion component"/>
    <property type="evidence" value="ECO:0007669"/>
    <property type="project" value="UniProtKB-KW"/>
</dbReference>
<dbReference type="GO" id="GO:0004482">
    <property type="term" value="F:mRNA 5'-cap (guanine-N7-)-methyltransferase activity"/>
    <property type="evidence" value="ECO:0007669"/>
    <property type="project" value="InterPro"/>
</dbReference>
<dbReference type="GO" id="GO:0006353">
    <property type="term" value="P:DNA-templated transcription termination"/>
    <property type="evidence" value="ECO:0007669"/>
    <property type="project" value="UniProtKB-KW"/>
</dbReference>
<dbReference type="Gene3D" id="3.40.50.11680">
    <property type="entry name" value="Poxvirus mRNA capping enzyme, small subunit"/>
    <property type="match status" value="1"/>
</dbReference>
<dbReference type="InterPro" id="IPR005009">
    <property type="entry name" value="Poxvirus_mRNA-cap_ssu"/>
</dbReference>
<dbReference type="InterPro" id="IPR043096">
    <property type="entry name" value="Poxvirus_mRNA-cap_ssu_sf"/>
</dbReference>
<dbReference type="Pfam" id="PF03341">
    <property type="entry name" value="Pox_mRNA-cap"/>
    <property type="match status" value="1"/>
</dbReference>
<feature type="chain" id="PRO_0000210135" description="mRNA-capping enzyme regulatory subunit">
    <location>
        <begin position="1"/>
        <end position="287"/>
    </location>
</feature>
<comment type="function">
    <text evidence="1">Regulatory subunit of the mRNA cap enzyme which stabilizes the catalytic subunit and enhances its methyltransferase activity through an allosteric mechanism. Heterodimeric mRNA capping enzyme catalyzes the linkage of a N7-methyl-guanosine moiety to the first transcribed nucleotide (cap 0 structure), whereas the polymerase associated VP39 is responsible for a second methylation at the 2'-O position of the ribose (cap 1 structure) (By similarity).</text>
</comment>
<comment type="function">
    <text evidence="1">The heterodimeric enzyme is also involved in early viral gene transcription termination and intermediate viral gene transcription initiation. Early gene transcription termination requires the termination factor VTF, the DNA-dependent ATPase NPH-I and the Rap94 subunit of the viral RNA polymerase, as well as the presence of a specific termination motif. Binds, together with RAP94, to the termination motif 5'-UUUUUNU-3' in the nascent early mRNA (By similarity).</text>
</comment>
<comment type="subunit">
    <text evidence="1">Heterodimer of a catalytic and a regulatory subunit. Intrinsic methyltransferase activity of the catalytic subunit is weak and needs to be stimulated 30- to 50-fold by the regulatory subunit, which is itself catalytically inert (By similarity).</text>
</comment>
<comment type="subcellular location">
    <subcellularLocation>
        <location evidence="2">Virion</location>
    </subcellularLocation>
    <text>All the enzymes and other proteins required to synthesize early mRNAs are packaged within the virion core along with the DNA genome.</text>
</comment>
<comment type="similarity">
    <text evidence="2">Belongs to the chordopoxvirinae mRNA-capping enzyme regulatory subunit family.</text>
</comment>
<name>MCES_VACCA</name>
<organismHost>
    <name type="scientific">Homo sapiens</name>
    <name type="common">Human</name>
    <dbReference type="NCBI Taxonomy" id="9606"/>
</organismHost>
<proteinExistence type="inferred from homology"/>
<reference key="1">
    <citation type="journal article" date="1998" name="Virology">
        <title>The complete genomic sequence of the modified vaccinia Ankara strain: comparison with other orthopoxviruses.</title>
        <authorList>
            <person name="Antoine G."/>
            <person name="Scheiflinger F."/>
            <person name="Dorner F."/>
            <person name="Falkner F.G."/>
        </authorList>
    </citation>
    <scope>NUCLEOTIDE SEQUENCE [LARGE SCALE GENOMIC DNA]</scope>
</reference>
<reference key="2">
    <citation type="submission" date="2004-04" db="EMBL/GenBank/DDBJ databases">
        <authorList>
            <person name="Esposito J.J."/>
            <person name="Frace M."/>
            <person name="Sammons S.A."/>
            <person name="Olsen-Rasmussen M.S."/>
            <person name="Osborne J."/>
            <person name="Khristova M."/>
            <person name="Wohlhueter R.M."/>
        </authorList>
    </citation>
    <scope>NUCLEOTIDE SEQUENCE [LARGE SCALE GENOMIC DNA]</scope>
    <source>
        <strain>Isolate Acambis 3000</strain>
    </source>
</reference>
<sequence>MDEIVKNIREGTHVLLPFYETLPELNLSLGKSPLPSLEYGANYFLQISRVNDLNRMPTDMLKLFTHDIMLPESDLDKVYEILKINSVKYYGRSTKADAVVADLSAHNKLFKRERDAIKSNNHLTENNLYISDYKMLTFDVFRPLFDFVNEKYCIIKLPTLFGRGVIDTMRIYCSLFKNVRLLKCVSDSWLKDSAIMVASDVCKKNLDLFMSHVKSVTKSSSWKDVNSVQFSILNNPVDTEFINKFLEFSNRVYEALYYVHSLLYSSMTSDSKSIENKHQRRLVKLLL</sequence>
<accession>O57215</accession>